<reference key="1">
    <citation type="journal article" date="2008" name="BMC Genomics">
        <title>Acidithiobacillus ferrooxidans metabolism: from genome sequence to industrial applications.</title>
        <authorList>
            <person name="Valdes J."/>
            <person name="Pedroso I."/>
            <person name="Quatrini R."/>
            <person name="Dodson R.J."/>
            <person name="Tettelin H."/>
            <person name="Blake R. II"/>
            <person name="Eisen J.A."/>
            <person name="Holmes D.S."/>
        </authorList>
    </citation>
    <scope>NUCLEOTIDE SEQUENCE [LARGE SCALE GENOMIC DNA]</scope>
    <source>
        <strain>ATCC 23270 / DSM 14882 / CIP 104768 / NCIMB 8455</strain>
    </source>
</reference>
<proteinExistence type="inferred from homology"/>
<sequence>MDEQEAVFMIERIYVKDISFESPNAPLSFVQTEAPTVDVGLNTASTVVEGMEGLTEVTLTVTVKAKAGESTYFAVEVQQSGLFRVQNIPEEHMPALLAVHCPTILFPYAREVVADLVGRGGFQPLHLHPVNFEALYQQAQTQQQNYTTQ</sequence>
<name>SECB_ACIF2</name>
<gene>
    <name evidence="1" type="primary">secB</name>
    <name type="ordered locus">AFE_2127</name>
</gene>
<evidence type="ECO:0000255" key="1">
    <source>
        <dbReference type="HAMAP-Rule" id="MF_00821"/>
    </source>
</evidence>
<feature type="chain" id="PRO_1000148692" description="Protein-export protein SecB">
    <location>
        <begin position="1"/>
        <end position="149"/>
    </location>
</feature>
<organism>
    <name type="scientific">Acidithiobacillus ferrooxidans (strain ATCC 23270 / DSM 14882 / CIP 104768 / NCIMB 8455)</name>
    <name type="common">Ferrobacillus ferrooxidans (strain ATCC 23270)</name>
    <dbReference type="NCBI Taxonomy" id="243159"/>
    <lineage>
        <taxon>Bacteria</taxon>
        <taxon>Pseudomonadati</taxon>
        <taxon>Pseudomonadota</taxon>
        <taxon>Acidithiobacillia</taxon>
        <taxon>Acidithiobacillales</taxon>
        <taxon>Acidithiobacillaceae</taxon>
        <taxon>Acidithiobacillus</taxon>
    </lineage>
</organism>
<keyword id="KW-0143">Chaperone</keyword>
<keyword id="KW-0963">Cytoplasm</keyword>
<keyword id="KW-0653">Protein transport</keyword>
<keyword id="KW-1185">Reference proteome</keyword>
<keyword id="KW-0811">Translocation</keyword>
<keyword id="KW-0813">Transport</keyword>
<accession>B7J4Y5</accession>
<protein>
    <recommendedName>
        <fullName evidence="1">Protein-export protein SecB</fullName>
    </recommendedName>
</protein>
<dbReference type="EMBL" id="CP001219">
    <property type="protein sequence ID" value="ACK78961.1"/>
    <property type="molecule type" value="Genomic_DNA"/>
</dbReference>
<dbReference type="RefSeq" id="WP_012536993.1">
    <property type="nucleotide sequence ID" value="NC_011761.1"/>
</dbReference>
<dbReference type="SMR" id="B7J4Y5"/>
<dbReference type="STRING" id="243159.AFE_2127"/>
<dbReference type="PaxDb" id="243159-AFE_2127"/>
<dbReference type="GeneID" id="65281253"/>
<dbReference type="KEGG" id="afr:AFE_2127"/>
<dbReference type="eggNOG" id="COG1952">
    <property type="taxonomic scope" value="Bacteria"/>
</dbReference>
<dbReference type="HOGENOM" id="CLU_111574_1_0_6"/>
<dbReference type="Proteomes" id="UP000001362">
    <property type="component" value="Chromosome"/>
</dbReference>
<dbReference type="GO" id="GO:0005737">
    <property type="term" value="C:cytoplasm"/>
    <property type="evidence" value="ECO:0007669"/>
    <property type="project" value="UniProtKB-SubCell"/>
</dbReference>
<dbReference type="GO" id="GO:0051082">
    <property type="term" value="F:unfolded protein binding"/>
    <property type="evidence" value="ECO:0007669"/>
    <property type="project" value="InterPro"/>
</dbReference>
<dbReference type="GO" id="GO:0051262">
    <property type="term" value="P:protein tetramerization"/>
    <property type="evidence" value="ECO:0007669"/>
    <property type="project" value="InterPro"/>
</dbReference>
<dbReference type="GO" id="GO:0015031">
    <property type="term" value="P:protein transport"/>
    <property type="evidence" value="ECO:0007669"/>
    <property type="project" value="UniProtKB-KW"/>
</dbReference>
<dbReference type="Gene3D" id="3.10.420.10">
    <property type="entry name" value="SecB-like"/>
    <property type="match status" value="1"/>
</dbReference>
<dbReference type="HAMAP" id="MF_00821">
    <property type="entry name" value="SecB"/>
    <property type="match status" value="1"/>
</dbReference>
<dbReference type="InterPro" id="IPR003708">
    <property type="entry name" value="SecB"/>
</dbReference>
<dbReference type="InterPro" id="IPR035958">
    <property type="entry name" value="SecB-like_sf"/>
</dbReference>
<dbReference type="NCBIfam" id="NF004392">
    <property type="entry name" value="PRK05751.1-3"/>
    <property type="match status" value="1"/>
</dbReference>
<dbReference type="NCBIfam" id="TIGR00809">
    <property type="entry name" value="secB"/>
    <property type="match status" value="1"/>
</dbReference>
<dbReference type="PANTHER" id="PTHR36918">
    <property type="match status" value="1"/>
</dbReference>
<dbReference type="PANTHER" id="PTHR36918:SF1">
    <property type="entry name" value="PROTEIN-EXPORT PROTEIN SECB"/>
    <property type="match status" value="1"/>
</dbReference>
<dbReference type="Pfam" id="PF02556">
    <property type="entry name" value="SecB"/>
    <property type="match status" value="1"/>
</dbReference>
<dbReference type="PRINTS" id="PR01594">
    <property type="entry name" value="SECBCHAPRONE"/>
</dbReference>
<dbReference type="SUPFAM" id="SSF54611">
    <property type="entry name" value="SecB-like"/>
    <property type="match status" value="1"/>
</dbReference>
<comment type="function">
    <text evidence="1">One of the proteins required for the normal export of preproteins out of the cell cytoplasm. It is a molecular chaperone that binds to a subset of precursor proteins, maintaining them in a translocation-competent state. It also specifically binds to its receptor SecA.</text>
</comment>
<comment type="subunit">
    <text evidence="1">Homotetramer, a dimer of dimers. One homotetramer interacts with 1 SecA dimer.</text>
</comment>
<comment type="subcellular location">
    <subcellularLocation>
        <location evidence="1">Cytoplasm</location>
    </subcellularLocation>
</comment>
<comment type="similarity">
    <text evidence="1">Belongs to the SecB family.</text>
</comment>